<reference key="1">
    <citation type="journal article" date="2011" name="J. Biol. Chem.">
        <title>Biochemical characterization of Pumilio1 and Pumilio2 in Xenopus oocytes.</title>
        <authorList>
            <person name="Ota R."/>
            <person name="Kotani T."/>
            <person name="Yamashita M."/>
        </authorList>
    </citation>
    <scope>NUCLEOTIDE SEQUENCE [MRNA]</scope>
    <scope>FUNCTION</scope>
    <scope>SUBUNIT</scope>
    <scope>PHOSPHORYLATION</scope>
</reference>
<dbReference type="EMBL" id="AB565475">
    <property type="protein sequence ID" value="BAJ41096.1"/>
    <property type="molecule type" value="mRNA"/>
</dbReference>
<dbReference type="RefSeq" id="NP_001233239.1">
    <property type="nucleotide sequence ID" value="NM_001246310.1"/>
</dbReference>
<dbReference type="SMR" id="E3WDQ9"/>
<dbReference type="IntAct" id="E3WDQ9">
    <property type="interactions" value="1"/>
</dbReference>
<dbReference type="GeneID" id="100653503"/>
<dbReference type="KEGG" id="xla:100653503"/>
<dbReference type="AGR" id="Xenbase:XB-GENE-6486498"/>
<dbReference type="CTD" id="100653503"/>
<dbReference type="Xenbase" id="XB-GENE-6486498">
    <property type="gene designation" value="pum2.L"/>
</dbReference>
<dbReference type="OrthoDB" id="668540at2759"/>
<dbReference type="Proteomes" id="UP000186698">
    <property type="component" value="Chromosome 5L"/>
</dbReference>
<dbReference type="Bgee" id="100653503">
    <property type="expression patterns" value="Expressed in blastula and 19 other cell types or tissues"/>
</dbReference>
<dbReference type="GO" id="GO:0005737">
    <property type="term" value="C:cytoplasm"/>
    <property type="evidence" value="ECO:0000318"/>
    <property type="project" value="GO_Central"/>
</dbReference>
<dbReference type="GO" id="GO:0005829">
    <property type="term" value="C:cytosol"/>
    <property type="evidence" value="ECO:0000318"/>
    <property type="project" value="GO_Central"/>
</dbReference>
<dbReference type="GO" id="GO:0000932">
    <property type="term" value="C:P-body"/>
    <property type="evidence" value="ECO:0007669"/>
    <property type="project" value="UniProtKB-SubCell"/>
</dbReference>
<dbReference type="GO" id="GO:0003730">
    <property type="term" value="F:mRNA 3'-UTR binding"/>
    <property type="evidence" value="ECO:0000318"/>
    <property type="project" value="GO_Central"/>
</dbReference>
<dbReference type="GO" id="GO:0035196">
    <property type="term" value="P:miRNA processing"/>
    <property type="evidence" value="ECO:0000318"/>
    <property type="project" value="GO_Central"/>
</dbReference>
<dbReference type="GO" id="GO:0043488">
    <property type="term" value="P:regulation of mRNA stability"/>
    <property type="evidence" value="ECO:0000318"/>
    <property type="project" value="GO_Central"/>
</dbReference>
<dbReference type="GO" id="GO:0006417">
    <property type="term" value="P:regulation of translation"/>
    <property type="evidence" value="ECO:0007669"/>
    <property type="project" value="UniProtKB-KW"/>
</dbReference>
<dbReference type="CDD" id="cd07920">
    <property type="entry name" value="Pumilio"/>
    <property type="match status" value="1"/>
</dbReference>
<dbReference type="FunFam" id="1.25.10.10:FF:000004">
    <property type="entry name" value="Pumilio homolog 1 isoform 2"/>
    <property type="match status" value="1"/>
</dbReference>
<dbReference type="Gene3D" id="1.25.10.10">
    <property type="entry name" value="Leucine-rich Repeat Variant"/>
    <property type="match status" value="1"/>
</dbReference>
<dbReference type="InterPro" id="IPR011989">
    <property type="entry name" value="ARM-like"/>
</dbReference>
<dbReference type="InterPro" id="IPR016024">
    <property type="entry name" value="ARM-type_fold"/>
</dbReference>
<dbReference type="InterPro" id="IPR033133">
    <property type="entry name" value="PUM-HD"/>
</dbReference>
<dbReference type="InterPro" id="IPR033712">
    <property type="entry name" value="Pumilio_RNA-bd"/>
</dbReference>
<dbReference type="InterPro" id="IPR001313">
    <property type="entry name" value="Pumilio_RNA-bd_rpt"/>
</dbReference>
<dbReference type="PANTHER" id="PTHR12537:SF52">
    <property type="entry name" value="PUMILIO HOMOLOG 2"/>
    <property type="match status" value="1"/>
</dbReference>
<dbReference type="PANTHER" id="PTHR12537">
    <property type="entry name" value="RNA BINDING PROTEIN PUMILIO-RELATED"/>
    <property type="match status" value="1"/>
</dbReference>
<dbReference type="Pfam" id="PF00806">
    <property type="entry name" value="PUF"/>
    <property type="match status" value="8"/>
</dbReference>
<dbReference type="SMART" id="SM00025">
    <property type="entry name" value="Pumilio"/>
    <property type="match status" value="8"/>
</dbReference>
<dbReference type="SUPFAM" id="SSF48371">
    <property type="entry name" value="ARM repeat"/>
    <property type="match status" value="1"/>
</dbReference>
<dbReference type="PROSITE" id="PS50302">
    <property type="entry name" value="PUM"/>
    <property type="match status" value="9"/>
</dbReference>
<dbReference type="PROSITE" id="PS50303">
    <property type="entry name" value="PUM_HD"/>
    <property type="match status" value="1"/>
</dbReference>
<protein>
    <recommendedName>
        <fullName evidence="7">Pumilio homolog 2</fullName>
        <shortName>Pumilio-2</shortName>
    </recommendedName>
</protein>
<name>PUM2_XENLA</name>
<evidence type="ECO:0000250" key="1">
    <source>
        <dbReference type="UniProtKB" id="Q14671"/>
    </source>
</evidence>
<evidence type="ECO:0000250" key="2">
    <source>
        <dbReference type="UniProtKB" id="Q80U78"/>
    </source>
</evidence>
<evidence type="ECO:0000255" key="3">
    <source>
        <dbReference type="PROSITE-ProRule" id="PRU00317"/>
    </source>
</evidence>
<evidence type="ECO:0000255" key="4">
    <source>
        <dbReference type="PROSITE-ProRule" id="PRU00318"/>
    </source>
</evidence>
<evidence type="ECO:0000256" key="5">
    <source>
        <dbReference type="SAM" id="MobiDB-lite"/>
    </source>
</evidence>
<evidence type="ECO:0000269" key="6">
    <source>
    </source>
</evidence>
<evidence type="ECO:0000305" key="7"/>
<organism>
    <name type="scientific">Xenopus laevis</name>
    <name type="common">African clawed frog</name>
    <dbReference type="NCBI Taxonomy" id="8355"/>
    <lineage>
        <taxon>Eukaryota</taxon>
        <taxon>Metazoa</taxon>
        <taxon>Chordata</taxon>
        <taxon>Craniata</taxon>
        <taxon>Vertebrata</taxon>
        <taxon>Euteleostomi</taxon>
        <taxon>Amphibia</taxon>
        <taxon>Batrachia</taxon>
        <taxon>Anura</taxon>
        <taxon>Pipoidea</taxon>
        <taxon>Pipidae</taxon>
        <taxon>Xenopodinae</taxon>
        <taxon>Xenopus</taxon>
        <taxon>Xenopus</taxon>
    </lineage>
</organism>
<keyword id="KW-0963">Cytoplasm</keyword>
<keyword id="KW-0597">Phosphoprotein</keyword>
<keyword id="KW-1185">Reference proteome</keyword>
<keyword id="KW-0677">Repeat</keyword>
<keyword id="KW-0694">RNA-binding</keyword>
<keyword id="KW-0810">Translation regulation</keyword>
<comment type="function">
    <text evidence="1 2 6">Sequence-specific RNA-binding protein that acts as a post-transcriptional repressor by binding the 3'-UTR of mRNA targets. Binds to an RNA consensus sequence, the Pumilio Response Element (PRE), 5'-UGUANAUA-3', that is related to the Nanos Response Element (NRE). Mediates post-transcriptional repression of transcripts via different mechanisms: acts via direct recruitment of deadenylase complexes leading to translational inhibition and mRNA degradation (PubMed:21098481). Also mediates deadenylation-independent repression by promoting accessibility of miRNAs.</text>
</comment>
<comment type="subunit">
    <text evidence="6">Component of a complex with papd4, sympk, tacc3, parn, dazl and cpeb1 (PubMed:21098481).</text>
</comment>
<comment type="subcellular location">
    <subcellularLocation>
        <location evidence="1">Cytoplasm</location>
    </subcellularLocation>
    <subcellularLocation>
        <location evidence="1">Cytoplasm</location>
        <location evidence="1">P-body</location>
    </subcellularLocation>
    <subcellularLocation>
        <location evidence="1">Cytoplasmic granule</location>
    </subcellularLocation>
</comment>
<comment type="domain">
    <text evidence="1">The pumilio repeats mediate the association with RNA by packing together to form a right-handed superhelix that approximates a half donut. RNA-binding occurs on the concave side of the surface. Pum2 is composed of 8 pumilio repeats of 36 residues; each repeat binds a single nucleotide in its RNA target. Residues at positions 12 and 16 of the pumilio repeat bind each RNA base via hydrogen bonding or van der Waals contacts with the Watson-Crick edge, while the amino acid at position 13 makes a stacking interaction. The recognition of RNA by pumilio repeats is base specific: cysteine and glutamine at position 12 and 16, respectively, bind adenine; asparagine and glutamine bind uracil; and serine and glutamate bind guanine.</text>
</comment>
<comment type="PTM">
    <text evidence="6">Phosphorylated.</text>
</comment>
<feature type="chain" id="PRO_0000433159" description="Pumilio homolog 2">
    <location>
        <begin position="1"/>
        <end position="1173"/>
    </location>
</feature>
<feature type="domain" description="PUM-HD" evidence="4">
    <location>
        <begin position="815"/>
        <end position="1155"/>
    </location>
</feature>
<feature type="repeat" description="Pumilio 1" evidence="3">
    <location>
        <begin position="835"/>
        <end position="870"/>
    </location>
</feature>
<feature type="repeat" description="Pumilio 2" evidence="3">
    <location>
        <begin position="871"/>
        <end position="906"/>
    </location>
</feature>
<feature type="repeat" description="Pumilio 3" evidence="3">
    <location>
        <begin position="907"/>
        <end position="942"/>
    </location>
</feature>
<feature type="repeat" description="Pumilio 4" evidence="3">
    <location>
        <begin position="943"/>
        <end position="978"/>
    </location>
</feature>
<feature type="repeat" description="Pumilio 5" evidence="3">
    <location>
        <begin position="979"/>
        <end position="1014"/>
    </location>
</feature>
<feature type="repeat" description="Pumilio 6" evidence="3">
    <location>
        <begin position="1015"/>
        <end position="1050"/>
    </location>
</feature>
<feature type="repeat" description="Pumilio 7" evidence="3">
    <location>
        <begin position="1051"/>
        <end position="1086"/>
    </location>
</feature>
<feature type="repeat" description="Pumilio 8" evidence="3">
    <location>
        <begin position="1087"/>
        <end position="1129"/>
    </location>
</feature>
<feature type="repeat" description="Pumilio 9" evidence="3">
    <location>
        <begin position="1130"/>
        <end position="1167"/>
    </location>
</feature>
<feature type="region of interest" description="Disordered" evidence="5">
    <location>
        <begin position="41"/>
        <end position="68"/>
    </location>
</feature>
<feature type="region of interest" description="Disordered" evidence="5">
    <location>
        <begin position="265"/>
        <end position="296"/>
    </location>
</feature>
<feature type="region of interest" description="Disordered" evidence="5">
    <location>
        <begin position="480"/>
        <end position="518"/>
    </location>
</feature>
<feature type="region of interest" description="Disordered" evidence="5">
    <location>
        <begin position="592"/>
        <end position="662"/>
    </location>
</feature>
<feature type="region of interest" description="Disordered" evidence="5">
    <location>
        <begin position="730"/>
        <end position="759"/>
    </location>
</feature>
<feature type="region of interest" description="Adenine-nucleotide binding in RNA target" evidence="1">
    <location>
        <begin position="850"/>
        <end position="854"/>
    </location>
</feature>
<feature type="region of interest" description="Uracil-nucleotide binding in RNA target" evidence="1">
    <location>
        <begin position="886"/>
        <end position="890"/>
    </location>
</feature>
<feature type="region of interest" description="Adenine-nucleotide binding in RNA target" evidence="1">
    <location>
        <begin position="922"/>
        <end position="926"/>
    </location>
</feature>
<feature type="region of interest" description="Non-specific-nucleotide binding in RNA target" evidence="1">
    <location>
        <begin position="958"/>
        <end position="962"/>
    </location>
</feature>
<feature type="region of interest" description="Adenine-nucleotide binding in RNA target" evidence="1">
    <location>
        <begin position="994"/>
        <end position="998"/>
    </location>
</feature>
<feature type="region of interest" description="Uracil-nucleotide binding in RNA target" evidence="1">
    <location>
        <begin position="1030"/>
        <end position="1034"/>
    </location>
</feature>
<feature type="region of interest" description="Guanine-nucleotide binding in RNA target" evidence="1">
    <location>
        <begin position="1066"/>
        <end position="1070"/>
    </location>
</feature>
<feature type="region of interest" description="Uracil-nucleotide binding in RNA target" evidence="1">
    <location>
        <begin position="1109"/>
        <end position="1113"/>
    </location>
</feature>
<feature type="compositionally biased region" description="Polar residues" evidence="5">
    <location>
        <begin position="287"/>
        <end position="296"/>
    </location>
</feature>
<feature type="compositionally biased region" description="Low complexity" evidence="5">
    <location>
        <begin position="480"/>
        <end position="492"/>
    </location>
</feature>
<feature type="compositionally biased region" description="Polar residues" evidence="5">
    <location>
        <begin position="493"/>
        <end position="518"/>
    </location>
</feature>
<feature type="compositionally biased region" description="Low complexity" evidence="5">
    <location>
        <begin position="606"/>
        <end position="622"/>
    </location>
</feature>
<feature type="compositionally biased region" description="Polar residues" evidence="5">
    <location>
        <begin position="623"/>
        <end position="633"/>
    </location>
</feature>
<feature type="compositionally biased region" description="Low complexity" evidence="5">
    <location>
        <begin position="634"/>
        <end position="657"/>
    </location>
</feature>
<proteinExistence type="evidence at protein level"/>
<accession>E3WDQ9</accession>
<gene>
    <name type="primary">pum2</name>
</gene>
<sequence length="1173" mass="127103">MNVPCVVGMNEVAWQESRGIMHASSGQEALGVGVGMVPSGVSSAGQAHGNNPHAMPPGAPSAQVPLSGRSQDDATVGYFFQRQAGEQLNGYSNKHRWPTGDSIDAAVRSVDEMNHDFQALALESRGMGELLPAKKFWEHEDPAKDGQKGMFLADEWRENTWGASHHSMSQPIMVQRRPGQGFHGNHDVASVLSPRSESGGLGVSMVEYVLSSSPADKLDPRFRKGVFSVRDCELDGPEKGEQKCKASPFEEEKKRDLISADTDNVSKLNGRGLPNGIESDCKDFNRTPGSRQASPTEITERIGPNSISAEVLGQHQNPMSNKPLSDEFPSTESQNLDGMEQVGLHSLQFDYPGNQIQMDSAGAGVGLFDYNTQQQMFQRQNALTVQQLTAAQQQQQQFTLAAAQQPHLAGMFSTGLAPAAFVPNPYIISAGHPGADPYTTLAGPAVVSPQYYGIPWGVYPAGLFQQQAAAAAQAANSNNQQAATQASQGQQQVMRATSNQRPLTPNQAQQGQQPESLAAANQAQIFGQGLATSMPGYQLLTPTAYYDQTGALVVGPGARAGLAAQVRLVASAPVLLSPAAAQAATATGANSLTGATNGMFRQMGPQQQQQQQQQQHQQQQQQPNANLHSNSFYGNSTMSNNSQSSSLFSPGPGQPGSTSLGFGSSNSLGAAIGSAFGGFGSSVGNSAGSSGSRRDSLSASCDLYKRSSSSLAAIGQPYYNSLGFSSSPSPISMPLPSQTSGHSLTPPPSLSSHGSSSSLHLGGLTNGSGRYFSAAPGAEAKYRSAANTSSFFSSNSQLFPPSRLRYNRADIMPSGRSRLLEDFRNNRFPNLQLRDLMGHIVEFSQDQHGSRFIQQKLERASPAERQLVFSEILQAAYQLMTDVFGNYVIQKFFEFGSMDQKLALATRIRGHVLPLALQMYGCRVIQKALESISTDQQSEMVRELDGHVLKCVKDQNGNHVVQKCIECVTPQSLHFIIEAFKGQVYVLSTHPYGCRVIQRILEHCTPEQTLPILEELHQSTEQLVQDQYGNYVIQHVLEHGRSDDKSKIVCEVRGQVLVLSQHKFASNVVEKCVTHSSRTERAFLIDEICCQNDGPHSALYTMMKDQYANYVVQKMIDMAEPAQRKIIMHKIRPHITTLRKYTYGKHILAKLEKYYMKNSPDLGLLVGPSNGML</sequence>